<reference key="1">
    <citation type="journal article" date="2003" name="J. Mol. Med.">
        <title>A novel gene, RSD-3/HSD-3.1, encodes a meiotic-related protein expressed in rat and human testis.</title>
        <authorList>
            <person name="Zhang X."/>
            <person name="Liu H."/>
            <person name="Zhang Y."/>
            <person name="Qiao Y."/>
            <person name="Miao S.Y."/>
            <person name="Wang L."/>
            <person name="Zhang J."/>
            <person name="Zong S."/>
            <person name="Koide S.S."/>
        </authorList>
    </citation>
    <scope>NUCLEOTIDE SEQUENCE [MRNA]</scope>
    <scope>TISSUE SPECIFICITY</scope>
    <source>
        <strain>Wistar</strain>
        <tissue>Testis</tissue>
    </source>
</reference>
<comment type="function">
    <text evidence="1">Involved in the maintenance of both rod and cone photoreceptor cells (By similarity). Required for photoreceptor-specific localization of proximal connecting cilium (CC) proteins RPGR, AHI1, NPHP1, NPHP4, and RPGRIP1 at the distal CC, a photoreceptor-specific extension of the primary cilium transition zone (By similarity). Maintenance of protein localization at the photoreceptor-specific distal CC is essential for normal microtubule stability and to prevent photoreceptor degeneration (By similarity).</text>
</comment>
<comment type="subunit">
    <text evidence="1 2">Found in a complex with CFAP410, NEK1 and SPATA7 (By similarity). Interacts with NEK1 (By similarity). Interacts with RPGRIP1 (By similarity). Interacts with RPGR (By similarity). Interacts with NPHP4 (By similarity). Interacts with NPHP1 (By similarity). Interacts with AHI1 (By similarity).</text>
</comment>
<comment type="subcellular location">
    <subcellularLocation>
        <location evidence="2">Cytoplasm</location>
        <location evidence="2">Cytoskeleton</location>
        <location evidence="2">Cilium axoneme</location>
    </subcellularLocation>
    <subcellularLocation>
        <location evidence="2">Cytoplasm</location>
        <location evidence="2">Cytoskeleton</location>
        <location evidence="2">Cilium basal body</location>
    </subcellularLocation>
    <subcellularLocation>
        <location evidence="2">Cytoplasm</location>
        <location evidence="2">Cytoskeleton</location>
    </subcellularLocation>
    <subcellularLocation>
        <location evidence="1">Cell projection</location>
        <location evidence="1">Cilium</location>
        <location evidence="1">Photoreceptor outer segment</location>
    </subcellularLocation>
    <text evidence="2">Localizes to the microtubule network.</text>
</comment>
<comment type="tissue specificity">
    <text evidence="4">In early prophase of primary spermatocytes.</text>
</comment>
<name>SPAT7_RAT</name>
<keyword id="KW-0966">Cell projection</keyword>
<keyword id="KW-0963">Cytoplasm</keyword>
<keyword id="KW-0206">Cytoskeleton</keyword>
<keyword id="KW-1185">Reference proteome</keyword>
<protein>
    <recommendedName>
        <fullName>Spermatogenesis-associated protein 7 homolog</fullName>
    </recommendedName>
    <alternativeName>
        <fullName>Fertility-related protein WMP1</fullName>
    </alternativeName>
    <alternativeName>
        <fullName>Rat sperm DNA no.3</fullName>
        <shortName>RSD-3</shortName>
    </alternativeName>
</protein>
<gene>
    <name type="primary">Spata7</name>
    <name type="synonym">Rsd3</name>
</gene>
<sequence>MAVHYNKILSAKAAVDCSIPVSVNASIKYADQQRREKLRKELARCEKEFKLSKSAMQTNSKMNSKFFVNSLQRPSGEPQDQDVLIEERLTRYPSFSKSLIPSPEGLHLSLPESNKILMNGTQKYPSTAPPRYSGCGHGYDRRPRSAHQFQVVISKTPSGDLLEKHADLFSNNQSPFTPRTLKTEAKSFLSQYRYYTPAKRRRDFSDQRMEAETQTELSSFNSELGTAEKKSSKDSDVSIKQAPNYMRNGAEDKIAPLSLQGQNLAWDKSKDGILQPSSERAPCTQFSPDSKIYSDEEELLYLSFMENVTDEILKLGLFSNRFLERLFERHIRKNKHHLEEGKMRYLLHGLKVDLGCISEEEQNSFRIFNEFHFQKALTSRENRFINDTEAVNHHERQQYQEALNMLSSVPKDENKMFSFPGEFLLPAHKVKHSEGVIVQQVNDETDFEALPWDGNNPSVSDSFIDQETSVDVIEGDSDFEMVETSRELCCLSTSLSPSVPLPSIEGGSNHDKELSTLKIMEMSIED</sequence>
<proteinExistence type="evidence at transcript level"/>
<evidence type="ECO:0000250" key="1">
    <source>
        <dbReference type="UniProtKB" id="Q80VP2"/>
    </source>
</evidence>
<evidence type="ECO:0000250" key="2">
    <source>
        <dbReference type="UniProtKB" id="Q9P0W8"/>
    </source>
</evidence>
<evidence type="ECO:0000256" key="3">
    <source>
        <dbReference type="SAM" id="MobiDB-lite"/>
    </source>
</evidence>
<evidence type="ECO:0000269" key="4">
    <source>
    </source>
</evidence>
<organism>
    <name type="scientific">Rattus norvegicus</name>
    <name type="common">Rat</name>
    <dbReference type="NCBI Taxonomy" id="10116"/>
    <lineage>
        <taxon>Eukaryota</taxon>
        <taxon>Metazoa</taxon>
        <taxon>Chordata</taxon>
        <taxon>Craniata</taxon>
        <taxon>Vertebrata</taxon>
        <taxon>Euteleostomi</taxon>
        <taxon>Mammalia</taxon>
        <taxon>Eutheria</taxon>
        <taxon>Euarchontoglires</taxon>
        <taxon>Glires</taxon>
        <taxon>Rodentia</taxon>
        <taxon>Myomorpha</taxon>
        <taxon>Muroidea</taxon>
        <taxon>Muridae</taxon>
        <taxon>Murinae</taxon>
        <taxon>Rattus</taxon>
    </lineage>
</organism>
<feature type="chain" id="PRO_0000072106" description="Spermatogenesis-associated protein 7 homolog">
    <location>
        <begin position="1"/>
        <end position="526"/>
    </location>
</feature>
<feature type="region of interest" description="Disordered" evidence="3">
    <location>
        <begin position="203"/>
        <end position="240"/>
    </location>
</feature>
<feature type="compositionally biased region" description="Polar residues" evidence="3">
    <location>
        <begin position="212"/>
        <end position="224"/>
    </location>
</feature>
<feature type="compositionally biased region" description="Basic and acidic residues" evidence="3">
    <location>
        <begin position="226"/>
        <end position="237"/>
    </location>
</feature>
<dbReference type="EMBL" id="AF094609">
    <property type="protein sequence ID" value="AAF01783.1"/>
    <property type="molecule type" value="mRNA"/>
</dbReference>
<dbReference type="FunCoup" id="Q9R0A3">
    <property type="interactions" value="1160"/>
</dbReference>
<dbReference type="STRING" id="10116.ENSRNOP00000005297"/>
<dbReference type="GlyGen" id="Q9R0A3">
    <property type="glycosylation" value="1 site"/>
</dbReference>
<dbReference type="PaxDb" id="10116-ENSRNOP00000005297"/>
<dbReference type="UCSC" id="RGD:621010">
    <property type="organism name" value="rat"/>
</dbReference>
<dbReference type="AGR" id="RGD:621010"/>
<dbReference type="RGD" id="621010">
    <property type="gene designation" value="Spata7"/>
</dbReference>
<dbReference type="eggNOG" id="ENOG502QSVU">
    <property type="taxonomic scope" value="Eukaryota"/>
</dbReference>
<dbReference type="InParanoid" id="Q9R0A3"/>
<dbReference type="PhylomeDB" id="Q9R0A3"/>
<dbReference type="PRO" id="PR:Q9R0A3"/>
<dbReference type="Proteomes" id="UP000002494">
    <property type="component" value="Unplaced"/>
</dbReference>
<dbReference type="GO" id="GO:0005930">
    <property type="term" value="C:axoneme"/>
    <property type="evidence" value="ECO:0000250"/>
    <property type="project" value="UniProtKB"/>
</dbReference>
<dbReference type="GO" id="GO:0036064">
    <property type="term" value="C:ciliary basal body"/>
    <property type="evidence" value="ECO:0000250"/>
    <property type="project" value="UniProtKB"/>
</dbReference>
<dbReference type="GO" id="GO:0015630">
    <property type="term" value="C:microtubule cytoskeleton"/>
    <property type="evidence" value="ECO:0000250"/>
    <property type="project" value="UniProtKB"/>
</dbReference>
<dbReference type="GO" id="GO:0032391">
    <property type="term" value="C:photoreceptor connecting cilium"/>
    <property type="evidence" value="ECO:0000250"/>
    <property type="project" value="UniProtKB"/>
</dbReference>
<dbReference type="GO" id="GO:0120206">
    <property type="term" value="C:photoreceptor distal connecting cilium"/>
    <property type="evidence" value="ECO:0000266"/>
    <property type="project" value="RGD"/>
</dbReference>
<dbReference type="GO" id="GO:0120200">
    <property type="term" value="C:rod photoreceptor outer segment"/>
    <property type="evidence" value="ECO:0000266"/>
    <property type="project" value="RGD"/>
</dbReference>
<dbReference type="GO" id="GO:0000226">
    <property type="term" value="P:microtubule cytoskeleton organization"/>
    <property type="evidence" value="ECO:0000266"/>
    <property type="project" value="RGD"/>
</dbReference>
<dbReference type="GO" id="GO:0045494">
    <property type="term" value="P:photoreceptor cell maintenance"/>
    <property type="evidence" value="ECO:0000250"/>
    <property type="project" value="UniProtKB"/>
</dbReference>
<dbReference type="GO" id="GO:1903621">
    <property type="term" value="P:protein localization to photoreceptor connecting cilium"/>
    <property type="evidence" value="ECO:0000250"/>
    <property type="project" value="UniProtKB"/>
</dbReference>
<dbReference type="GO" id="GO:1903546">
    <property type="term" value="P:protein localization to photoreceptor outer segment"/>
    <property type="evidence" value="ECO:0000250"/>
    <property type="project" value="UniProtKB"/>
</dbReference>
<dbReference type="GO" id="GO:0007283">
    <property type="term" value="P:spermatogenesis"/>
    <property type="evidence" value="ECO:0000270"/>
    <property type="project" value="RGD"/>
</dbReference>
<dbReference type="InterPro" id="IPR029357">
    <property type="entry name" value="SPATA7"/>
</dbReference>
<dbReference type="PANTHER" id="PTHR14917">
    <property type="entry name" value="SPERMATOGENESIS-ASSOCIATED PROTEIN 7"/>
    <property type="match status" value="1"/>
</dbReference>
<dbReference type="PANTHER" id="PTHR14917:SF2">
    <property type="entry name" value="SPERMATOGENESIS-ASSOCIATED PROTEIN 7"/>
    <property type="match status" value="1"/>
</dbReference>
<dbReference type="Pfam" id="PF15244">
    <property type="entry name" value="HSD3"/>
    <property type="match status" value="1"/>
</dbReference>
<accession>Q9R0A3</accession>